<feature type="chain" id="PRO_0000357810" description="NADH-quinone oxidoreductase subunit D">
    <location>
        <begin position="1"/>
        <end position="393"/>
    </location>
</feature>
<gene>
    <name evidence="1" type="primary">nuoD</name>
    <name type="ordered locus">ECH_0616</name>
</gene>
<organism>
    <name type="scientific">Ehrlichia chaffeensis (strain ATCC CRL-10679 / Arkansas)</name>
    <dbReference type="NCBI Taxonomy" id="205920"/>
    <lineage>
        <taxon>Bacteria</taxon>
        <taxon>Pseudomonadati</taxon>
        <taxon>Pseudomonadota</taxon>
        <taxon>Alphaproteobacteria</taxon>
        <taxon>Rickettsiales</taxon>
        <taxon>Anaplasmataceae</taxon>
        <taxon>Ehrlichia</taxon>
    </lineage>
</organism>
<sequence>MSDRVKITPMTLNFGPQHPAAHGVMRLVLEMGGEVIERIDPHIGLLHRGTEKLIEYKTYLQALPYFDRLDYVSPMCQEHAYSLCVEKLLKCEIPIRAKYLRVIFCELTRILNHLLNISSQALDIGAMTPLLWMFEEREKILGFYERASGARFHSAYIRPGGVAADVPDDLIDDIFKFIKTFPKFIDDVDELLTENRIWKQRNVDIGIVSKEQALDWGFSGPMLRACGIPWDLRKSQPYEIYEDLEFEIPIGKKGDCYDRYLVRMAEIRQSIKLLEQCLNRLPNGPIKTDDRKIAPPKRSEMKESMEALIHHFKLYSEGYSVPIGETYMAVEAPKGEFGVYIVSDGTNKPYRCRIRAPGFAHLQAIDMMAKGHMLADLTAIIGSLDIVFGEIDR</sequence>
<protein>
    <recommendedName>
        <fullName evidence="1">NADH-quinone oxidoreductase subunit D</fullName>
        <ecNumber evidence="1">7.1.1.-</ecNumber>
    </recommendedName>
    <alternativeName>
        <fullName evidence="1">NADH dehydrogenase I subunit D</fullName>
    </alternativeName>
    <alternativeName>
        <fullName evidence="1">NDH-1 subunit D</fullName>
    </alternativeName>
</protein>
<dbReference type="EC" id="7.1.1.-" evidence="1"/>
<dbReference type="EMBL" id="CP000236">
    <property type="protein sequence ID" value="ABD44926.1"/>
    <property type="molecule type" value="Genomic_DNA"/>
</dbReference>
<dbReference type="RefSeq" id="WP_011452720.1">
    <property type="nucleotide sequence ID" value="NC_007799.1"/>
</dbReference>
<dbReference type="SMR" id="Q2GGK7"/>
<dbReference type="STRING" id="205920.ECH_0616"/>
<dbReference type="KEGG" id="ech:ECH_0616"/>
<dbReference type="eggNOG" id="COG0649">
    <property type="taxonomic scope" value="Bacteria"/>
</dbReference>
<dbReference type="HOGENOM" id="CLU_015134_1_1_5"/>
<dbReference type="OrthoDB" id="9801496at2"/>
<dbReference type="Proteomes" id="UP000008320">
    <property type="component" value="Chromosome"/>
</dbReference>
<dbReference type="GO" id="GO:0005886">
    <property type="term" value="C:plasma membrane"/>
    <property type="evidence" value="ECO:0007669"/>
    <property type="project" value="UniProtKB-SubCell"/>
</dbReference>
<dbReference type="GO" id="GO:0051287">
    <property type="term" value="F:NAD binding"/>
    <property type="evidence" value="ECO:0007669"/>
    <property type="project" value="InterPro"/>
</dbReference>
<dbReference type="GO" id="GO:0050136">
    <property type="term" value="F:NADH:ubiquinone reductase (non-electrogenic) activity"/>
    <property type="evidence" value="ECO:0007669"/>
    <property type="project" value="UniProtKB-UniRule"/>
</dbReference>
<dbReference type="GO" id="GO:0048038">
    <property type="term" value="F:quinone binding"/>
    <property type="evidence" value="ECO:0007669"/>
    <property type="project" value="UniProtKB-KW"/>
</dbReference>
<dbReference type="FunFam" id="1.10.645.10:FF:000005">
    <property type="entry name" value="NADH-quinone oxidoreductase subunit D"/>
    <property type="match status" value="1"/>
</dbReference>
<dbReference type="Gene3D" id="1.10.645.10">
    <property type="entry name" value="Cytochrome-c3 Hydrogenase, chain B"/>
    <property type="match status" value="1"/>
</dbReference>
<dbReference type="HAMAP" id="MF_01358">
    <property type="entry name" value="NDH1_NuoD"/>
    <property type="match status" value="1"/>
</dbReference>
<dbReference type="InterPro" id="IPR001135">
    <property type="entry name" value="NADH_Q_OxRdtase_suD"/>
</dbReference>
<dbReference type="InterPro" id="IPR014029">
    <property type="entry name" value="NADH_UbQ_OxRdtase_49kDa_CS"/>
</dbReference>
<dbReference type="InterPro" id="IPR022885">
    <property type="entry name" value="NDH1_su_D/H"/>
</dbReference>
<dbReference type="InterPro" id="IPR029014">
    <property type="entry name" value="NiFe-Hase_large"/>
</dbReference>
<dbReference type="NCBIfam" id="TIGR01962">
    <property type="entry name" value="NuoD"/>
    <property type="match status" value="1"/>
</dbReference>
<dbReference type="NCBIfam" id="NF004739">
    <property type="entry name" value="PRK06075.1"/>
    <property type="match status" value="1"/>
</dbReference>
<dbReference type="PANTHER" id="PTHR11993:SF10">
    <property type="entry name" value="NADH DEHYDROGENASE [UBIQUINONE] IRON-SULFUR PROTEIN 2, MITOCHONDRIAL"/>
    <property type="match status" value="1"/>
</dbReference>
<dbReference type="PANTHER" id="PTHR11993">
    <property type="entry name" value="NADH-UBIQUINONE OXIDOREDUCTASE 49 KDA SUBUNIT"/>
    <property type="match status" value="1"/>
</dbReference>
<dbReference type="Pfam" id="PF00346">
    <property type="entry name" value="Complex1_49kDa"/>
    <property type="match status" value="1"/>
</dbReference>
<dbReference type="SUPFAM" id="SSF56762">
    <property type="entry name" value="HydB/Nqo4-like"/>
    <property type="match status" value="1"/>
</dbReference>
<dbReference type="PROSITE" id="PS00535">
    <property type="entry name" value="COMPLEX1_49K"/>
    <property type="match status" value="1"/>
</dbReference>
<name>NUOD_EHRCR</name>
<comment type="function">
    <text evidence="1">NDH-1 shuttles electrons from NADH, via FMN and iron-sulfur (Fe-S) centers, to quinones in the respiratory chain. The immediate electron acceptor for the enzyme in this species is believed to be ubiquinone. Couples the redox reaction to proton translocation (for every two electrons transferred, four hydrogen ions are translocated across the cytoplasmic membrane), and thus conserves the redox energy in a proton gradient.</text>
</comment>
<comment type="catalytic activity">
    <reaction evidence="1">
        <text>a quinone + NADH + 5 H(+)(in) = a quinol + NAD(+) + 4 H(+)(out)</text>
        <dbReference type="Rhea" id="RHEA:57888"/>
        <dbReference type="ChEBI" id="CHEBI:15378"/>
        <dbReference type="ChEBI" id="CHEBI:24646"/>
        <dbReference type="ChEBI" id="CHEBI:57540"/>
        <dbReference type="ChEBI" id="CHEBI:57945"/>
        <dbReference type="ChEBI" id="CHEBI:132124"/>
    </reaction>
</comment>
<comment type="subunit">
    <text evidence="1">NDH-1 is composed of 14 different subunits. Subunits NuoB, C, D, E, F, and G constitute the peripheral sector of the complex.</text>
</comment>
<comment type="subcellular location">
    <subcellularLocation>
        <location evidence="1">Cell inner membrane</location>
        <topology evidence="1">Peripheral membrane protein</topology>
        <orientation evidence="1">Cytoplasmic side</orientation>
    </subcellularLocation>
</comment>
<comment type="similarity">
    <text evidence="1">Belongs to the complex I 49 kDa subunit family.</text>
</comment>
<evidence type="ECO:0000255" key="1">
    <source>
        <dbReference type="HAMAP-Rule" id="MF_01358"/>
    </source>
</evidence>
<proteinExistence type="inferred from homology"/>
<keyword id="KW-0997">Cell inner membrane</keyword>
<keyword id="KW-1003">Cell membrane</keyword>
<keyword id="KW-0472">Membrane</keyword>
<keyword id="KW-0520">NAD</keyword>
<keyword id="KW-0874">Quinone</keyword>
<keyword id="KW-1185">Reference proteome</keyword>
<keyword id="KW-1278">Translocase</keyword>
<keyword id="KW-0813">Transport</keyword>
<keyword id="KW-0830">Ubiquinone</keyword>
<reference key="1">
    <citation type="journal article" date="2006" name="PLoS Genet.">
        <title>Comparative genomics of emerging human ehrlichiosis agents.</title>
        <authorList>
            <person name="Dunning Hotopp J.C."/>
            <person name="Lin M."/>
            <person name="Madupu R."/>
            <person name="Crabtree J."/>
            <person name="Angiuoli S.V."/>
            <person name="Eisen J.A."/>
            <person name="Seshadri R."/>
            <person name="Ren Q."/>
            <person name="Wu M."/>
            <person name="Utterback T.R."/>
            <person name="Smith S."/>
            <person name="Lewis M."/>
            <person name="Khouri H."/>
            <person name="Zhang C."/>
            <person name="Niu H."/>
            <person name="Lin Q."/>
            <person name="Ohashi N."/>
            <person name="Zhi N."/>
            <person name="Nelson W.C."/>
            <person name="Brinkac L.M."/>
            <person name="Dodson R.J."/>
            <person name="Rosovitz M.J."/>
            <person name="Sundaram J.P."/>
            <person name="Daugherty S.C."/>
            <person name="Davidsen T."/>
            <person name="Durkin A.S."/>
            <person name="Gwinn M.L."/>
            <person name="Haft D.H."/>
            <person name="Selengut J.D."/>
            <person name="Sullivan S.A."/>
            <person name="Zafar N."/>
            <person name="Zhou L."/>
            <person name="Benahmed F."/>
            <person name="Forberger H."/>
            <person name="Halpin R."/>
            <person name="Mulligan S."/>
            <person name="Robinson J."/>
            <person name="White O."/>
            <person name="Rikihisa Y."/>
            <person name="Tettelin H."/>
        </authorList>
    </citation>
    <scope>NUCLEOTIDE SEQUENCE [LARGE SCALE GENOMIC DNA]</scope>
    <source>
        <strain>ATCC CRL-10679 / Arkansas</strain>
    </source>
</reference>
<accession>Q2GGK7</accession>